<evidence type="ECO:0000250" key="1">
    <source>
        <dbReference type="UniProtKB" id="Q9HAC8"/>
    </source>
</evidence>
<evidence type="ECO:0000255" key="2">
    <source>
        <dbReference type="PROSITE-ProRule" id="PRU00214"/>
    </source>
</evidence>
<evidence type="ECO:0000256" key="3">
    <source>
        <dbReference type="SAM" id="MobiDB-lite"/>
    </source>
</evidence>
<sequence length="227" mass="25761">MGGCVGRERAETRGRGSRTQRKRGGRNEPLKKDKPKWKSDYPMTEGQLRSKRDEFWDTAPAFEGRKEIWDALKAAAVALECSDHELAQAIVDGANITLPHGSLTECYDELGNRYQLPVYCLAPPVNLISERSEEDLTDNPEPQTAQKKEFQLKVRLSTGKDLRLNASMSDTIGLLKKQLQAQEDIDISHQRWFFSGKLLTDKTRLQDTKIQKDFVIQVIVNQPAPNH</sequence>
<comment type="function">
    <text evidence="1">May be involved in the regulation of cellular senescence through a positive feedback loop with TP53.</text>
</comment>
<organism>
    <name type="scientific">Danio rerio</name>
    <name type="common">Zebrafish</name>
    <name type="synonym">Brachydanio rerio</name>
    <dbReference type="NCBI Taxonomy" id="7955"/>
    <lineage>
        <taxon>Eukaryota</taxon>
        <taxon>Metazoa</taxon>
        <taxon>Chordata</taxon>
        <taxon>Craniata</taxon>
        <taxon>Vertebrata</taxon>
        <taxon>Euteleostomi</taxon>
        <taxon>Actinopterygii</taxon>
        <taxon>Neopterygii</taxon>
        <taxon>Teleostei</taxon>
        <taxon>Ostariophysi</taxon>
        <taxon>Cypriniformes</taxon>
        <taxon>Danionidae</taxon>
        <taxon>Danioninae</taxon>
        <taxon>Danio</taxon>
    </lineage>
</organism>
<gene>
    <name type="primary">ubtd1</name>
    <name type="ORF">zgc:114107</name>
</gene>
<reference key="1">
    <citation type="submission" date="2005-06" db="EMBL/GenBank/DDBJ databases">
        <authorList>
            <consortium name="NIH - Zebrafish Gene Collection (ZGC) project"/>
        </authorList>
    </citation>
    <scope>NUCLEOTIDE SEQUENCE [LARGE SCALE MRNA]</scope>
    <source>
        <tissue>Embryo</tissue>
    </source>
</reference>
<name>UBTD1_DANRE</name>
<protein>
    <recommendedName>
        <fullName>Ubiquitin domain-containing protein 1</fullName>
    </recommendedName>
</protein>
<feature type="chain" id="PRO_0000242677" description="Ubiquitin domain-containing protein 1">
    <location>
        <begin position="1"/>
        <end position="227"/>
    </location>
</feature>
<feature type="domain" description="Ubiquitin-like" evidence="2">
    <location>
        <begin position="150"/>
        <end position="225"/>
    </location>
</feature>
<feature type="region of interest" description="Disordered" evidence="3">
    <location>
        <begin position="1"/>
        <end position="45"/>
    </location>
</feature>
<feature type="compositionally biased region" description="Basic and acidic residues" evidence="3">
    <location>
        <begin position="1"/>
        <end position="14"/>
    </location>
</feature>
<feature type="compositionally biased region" description="Basic residues" evidence="3">
    <location>
        <begin position="15"/>
        <end position="24"/>
    </location>
</feature>
<feature type="compositionally biased region" description="Basic and acidic residues" evidence="3">
    <location>
        <begin position="25"/>
        <end position="39"/>
    </location>
</feature>
<dbReference type="EMBL" id="BC097167">
    <property type="protein sequence ID" value="AAH97167.1"/>
    <property type="molecule type" value="mRNA"/>
</dbReference>
<dbReference type="RefSeq" id="NP_001025436.1">
    <property type="nucleotide sequence ID" value="NM_001030265.1"/>
</dbReference>
<dbReference type="SMR" id="Q4V8W7"/>
<dbReference type="FunCoup" id="Q4V8W7">
    <property type="interactions" value="239"/>
</dbReference>
<dbReference type="STRING" id="7955.ENSDARP00000078219"/>
<dbReference type="PaxDb" id="7955-ENSDARP00000078219"/>
<dbReference type="GeneID" id="571832"/>
<dbReference type="KEGG" id="dre:571832"/>
<dbReference type="AGR" id="ZFIN:ZDB-GENE-050913-62"/>
<dbReference type="CTD" id="571832"/>
<dbReference type="ZFIN" id="ZDB-GENE-050913-62">
    <property type="gene designation" value="ubtd1b"/>
</dbReference>
<dbReference type="eggNOG" id="KOG0013">
    <property type="taxonomic scope" value="Eukaryota"/>
</dbReference>
<dbReference type="InParanoid" id="Q4V8W7"/>
<dbReference type="OrthoDB" id="1640476at2759"/>
<dbReference type="PhylomeDB" id="Q4V8W7"/>
<dbReference type="PRO" id="PR:Q4V8W7"/>
<dbReference type="Proteomes" id="UP000000437">
    <property type="component" value="Chromosome 12"/>
</dbReference>
<dbReference type="Gene3D" id="3.10.20.90">
    <property type="entry name" value="Phosphatidylinositol 3-kinase Catalytic Subunit, Chain A, domain 1"/>
    <property type="match status" value="1"/>
</dbReference>
<dbReference type="Gene3D" id="1.20.225.20">
    <property type="entry name" value="Ub domain-containing protein, DC-UbP/UBTD2, N-terminal domain"/>
    <property type="match status" value="1"/>
</dbReference>
<dbReference type="InterPro" id="IPR032752">
    <property type="entry name" value="DC-UbP/UBTD2_N"/>
</dbReference>
<dbReference type="InterPro" id="IPR038169">
    <property type="entry name" value="DC-UbP/UBTD2_N_sf"/>
</dbReference>
<dbReference type="InterPro" id="IPR000626">
    <property type="entry name" value="Ubiquitin-like_dom"/>
</dbReference>
<dbReference type="InterPro" id="IPR029071">
    <property type="entry name" value="Ubiquitin-like_domsf"/>
</dbReference>
<dbReference type="InterPro" id="IPR039869">
    <property type="entry name" value="UBTD1/2"/>
</dbReference>
<dbReference type="PANTHER" id="PTHR13609">
    <property type="entry name" value="UBIQUITIN DOMAIN CONTAINING 1 PROTEIN-RELATED"/>
    <property type="match status" value="1"/>
</dbReference>
<dbReference type="Pfam" id="PF16455">
    <property type="entry name" value="UBD"/>
    <property type="match status" value="1"/>
</dbReference>
<dbReference type="Pfam" id="PF00240">
    <property type="entry name" value="ubiquitin"/>
    <property type="match status" value="1"/>
</dbReference>
<dbReference type="SUPFAM" id="SSF54236">
    <property type="entry name" value="Ubiquitin-like"/>
    <property type="match status" value="1"/>
</dbReference>
<dbReference type="PROSITE" id="PS50053">
    <property type="entry name" value="UBIQUITIN_2"/>
    <property type="match status" value="1"/>
</dbReference>
<proteinExistence type="evidence at transcript level"/>
<keyword id="KW-1185">Reference proteome</keyword>
<accession>Q4V8W7</accession>